<proteinExistence type="evidence at protein level"/>
<dbReference type="EC" id="4.1.2.40"/>
<dbReference type="EMBL" id="AE004092">
    <property type="protein sequence ID" value="AAK34623.1"/>
    <property type="molecule type" value="Genomic_DNA"/>
</dbReference>
<dbReference type="EMBL" id="CP000017">
    <property type="protein sequence ID" value="AAZ52253.1"/>
    <property type="molecule type" value="Genomic_DNA"/>
</dbReference>
<dbReference type="RefSeq" id="NP_269902.1">
    <property type="nucleotide sequence ID" value="NC_002737.2"/>
</dbReference>
<dbReference type="PDB" id="3JRK">
    <property type="method" value="X-ray"/>
    <property type="resolution" value="1.97 A"/>
    <property type="chains" value="A/B/C/D/E/F/G/H=6-327"/>
</dbReference>
<dbReference type="PDB" id="3MHF">
    <property type="method" value="X-ray"/>
    <property type="resolution" value="1.87 A"/>
    <property type="chains" value="A/B/C/D=2-327"/>
</dbReference>
<dbReference type="PDB" id="3MHG">
    <property type="method" value="X-ray"/>
    <property type="resolution" value="1.92 A"/>
    <property type="chains" value="A/B/C/D=2-327"/>
</dbReference>
<dbReference type="PDB" id="5F2G">
    <property type="method" value="X-ray"/>
    <property type="resolution" value="1.92 A"/>
    <property type="chains" value="A/B/C/D=1-327"/>
</dbReference>
<dbReference type="PDB" id="5F2I">
    <property type="method" value="X-ray"/>
    <property type="resolution" value="1.95 A"/>
    <property type="chains" value="A/B/C/D=1-327"/>
</dbReference>
<dbReference type="PDB" id="5F2L">
    <property type="method" value="X-ray"/>
    <property type="resolution" value="1.75 A"/>
    <property type="chains" value="A/B/C/D=1-327"/>
</dbReference>
<dbReference type="PDB" id="5F2M">
    <property type="method" value="X-ray"/>
    <property type="resolution" value="1.92 A"/>
    <property type="chains" value="A/B/C/D=1-327"/>
</dbReference>
<dbReference type="PDB" id="5F4S">
    <property type="method" value="X-ray"/>
    <property type="resolution" value="1.72 A"/>
    <property type="chains" value="A/B/C/D=1-327"/>
</dbReference>
<dbReference type="PDB" id="5F4W">
    <property type="method" value="X-ray"/>
    <property type="resolution" value="1.66 A"/>
    <property type="chains" value="A/B/C/D=1-327"/>
</dbReference>
<dbReference type="PDB" id="5FF7">
    <property type="method" value="X-ray"/>
    <property type="resolution" value="2.09 A"/>
    <property type="chains" value="A/B/C/D=1-327"/>
</dbReference>
<dbReference type="PDBsum" id="3JRK"/>
<dbReference type="PDBsum" id="3MHF"/>
<dbReference type="PDBsum" id="3MHG"/>
<dbReference type="PDBsum" id="5F2G"/>
<dbReference type="PDBsum" id="5F2I"/>
<dbReference type="PDBsum" id="5F2L"/>
<dbReference type="PDBsum" id="5F2M"/>
<dbReference type="PDBsum" id="5F4S"/>
<dbReference type="PDBsum" id="5F4W"/>
<dbReference type="PDBsum" id="5FF7"/>
<dbReference type="SMR" id="P63705"/>
<dbReference type="PaxDb" id="1314-HKU360_01758"/>
<dbReference type="KEGG" id="spy:SPy_1919"/>
<dbReference type="KEGG" id="spz:M5005_Spy1635"/>
<dbReference type="PATRIC" id="fig|160490.10.peg.1668"/>
<dbReference type="HOGENOM" id="CLU_058971_0_1_9"/>
<dbReference type="OMA" id="CIKILLY"/>
<dbReference type="UniPathway" id="UPA00704">
    <property type="reaction ID" value="UER00716"/>
</dbReference>
<dbReference type="EvolutionaryTrace" id="P63705"/>
<dbReference type="Proteomes" id="UP000000750">
    <property type="component" value="Chromosome"/>
</dbReference>
<dbReference type="GO" id="GO:0061595">
    <property type="term" value="F:6-deoxy-6-sulfofructose-1-phosphate aldolase activity"/>
    <property type="evidence" value="ECO:0007669"/>
    <property type="project" value="TreeGrafter"/>
</dbReference>
<dbReference type="GO" id="GO:0009024">
    <property type="term" value="F:tagatose-6-phosphate kinase activity"/>
    <property type="evidence" value="ECO:0007669"/>
    <property type="project" value="InterPro"/>
</dbReference>
<dbReference type="GO" id="GO:0009025">
    <property type="term" value="F:tagatose-bisphosphate aldolase activity"/>
    <property type="evidence" value="ECO:0007669"/>
    <property type="project" value="UniProtKB-UniRule"/>
</dbReference>
<dbReference type="GO" id="GO:1902777">
    <property type="term" value="P:6-sulfoquinovose(1-) catabolic process"/>
    <property type="evidence" value="ECO:0007669"/>
    <property type="project" value="TreeGrafter"/>
</dbReference>
<dbReference type="GO" id="GO:2001059">
    <property type="term" value="P:D-tagatose 6-phosphate catabolic process"/>
    <property type="evidence" value="ECO:0007669"/>
    <property type="project" value="UniProtKB-UniRule"/>
</dbReference>
<dbReference type="GO" id="GO:0019512">
    <property type="term" value="P:lactose catabolic process via tagatose-6-phosphate"/>
    <property type="evidence" value="ECO:0007669"/>
    <property type="project" value="InterPro"/>
</dbReference>
<dbReference type="FunFam" id="3.20.20.70:FF:000137">
    <property type="entry name" value="Tagatose 1,6-diphosphate aldolase 2"/>
    <property type="match status" value="1"/>
</dbReference>
<dbReference type="Gene3D" id="3.20.20.70">
    <property type="entry name" value="Aldolase class I"/>
    <property type="match status" value="1"/>
</dbReference>
<dbReference type="HAMAP" id="MF_00734">
    <property type="entry name" value="LacD"/>
    <property type="match status" value="1"/>
</dbReference>
<dbReference type="InterPro" id="IPR013785">
    <property type="entry name" value="Aldolase_TIM"/>
</dbReference>
<dbReference type="InterPro" id="IPR002915">
    <property type="entry name" value="DeoC/FbaB/LacD_aldolase"/>
</dbReference>
<dbReference type="InterPro" id="IPR050552">
    <property type="entry name" value="LacD_aldolase"/>
</dbReference>
<dbReference type="InterPro" id="IPR005927">
    <property type="entry name" value="Tag_1.6-dipho_adolase"/>
</dbReference>
<dbReference type="NCBIfam" id="TIGR01232">
    <property type="entry name" value="lacD"/>
    <property type="match status" value="1"/>
</dbReference>
<dbReference type="NCBIfam" id="NF003180">
    <property type="entry name" value="PRK04161.1"/>
    <property type="match status" value="1"/>
</dbReference>
<dbReference type="NCBIfam" id="NF009065">
    <property type="entry name" value="PRK12399.1"/>
    <property type="match status" value="1"/>
</dbReference>
<dbReference type="NCBIfam" id="NF009498">
    <property type="entry name" value="PRK12858.1"/>
    <property type="match status" value="1"/>
</dbReference>
<dbReference type="PANTHER" id="PTHR39340">
    <property type="entry name" value="SULFOFRUCTOSEPHOSPHATE ALDOLASE"/>
    <property type="match status" value="1"/>
</dbReference>
<dbReference type="PANTHER" id="PTHR39340:SF1">
    <property type="entry name" value="SULFOFRUCTOSEPHOSPHATE ALDOLASE"/>
    <property type="match status" value="1"/>
</dbReference>
<dbReference type="Pfam" id="PF01791">
    <property type="entry name" value="DeoC"/>
    <property type="match status" value="1"/>
</dbReference>
<dbReference type="SMART" id="SM01133">
    <property type="entry name" value="DeoC"/>
    <property type="match status" value="1"/>
</dbReference>
<dbReference type="SUPFAM" id="SSF51569">
    <property type="entry name" value="Aldolase"/>
    <property type="match status" value="1"/>
</dbReference>
<evidence type="ECO:0000305" key="1"/>
<evidence type="ECO:0007829" key="2">
    <source>
        <dbReference type="PDB" id="5F4W"/>
    </source>
</evidence>
<name>LACD2_STRP1</name>
<feature type="chain" id="PRO_0000203965" description="Tagatose 1,6-diphosphate aldolase 2">
    <location>
        <begin position="1"/>
        <end position="327"/>
    </location>
</feature>
<feature type="helix" evidence="2">
    <location>
        <begin position="7"/>
        <end position="16"/>
    </location>
</feature>
<feature type="strand" evidence="2">
    <location>
        <begin position="21"/>
        <end position="27"/>
    </location>
</feature>
<feature type="helix" evidence="2">
    <location>
        <begin position="31"/>
        <end position="37"/>
    </location>
</feature>
<feature type="turn" evidence="2">
    <location>
        <begin position="38"/>
        <end position="40"/>
    </location>
</feature>
<feature type="helix" evidence="2">
    <location>
        <begin position="47"/>
        <end position="61"/>
    </location>
</feature>
<feature type="helix" evidence="2">
    <location>
        <begin position="62"/>
        <end position="64"/>
    </location>
</feature>
<feature type="strand" evidence="2">
    <location>
        <begin position="65"/>
        <end position="70"/>
    </location>
</feature>
<feature type="turn" evidence="2">
    <location>
        <begin position="72"/>
        <end position="74"/>
    </location>
</feature>
<feature type="helix" evidence="2">
    <location>
        <begin position="76"/>
        <end position="80"/>
    </location>
</feature>
<feature type="strand" evidence="2">
    <location>
        <begin position="87"/>
        <end position="91"/>
    </location>
</feature>
<feature type="helix" evidence="2">
    <location>
        <begin position="114"/>
        <end position="119"/>
    </location>
</feature>
<feature type="strand" evidence="2">
    <location>
        <begin position="123"/>
        <end position="131"/>
    </location>
</feature>
<feature type="helix" evidence="2">
    <location>
        <begin position="137"/>
        <end position="157"/>
    </location>
</feature>
<feature type="strand" evidence="2">
    <location>
        <begin position="161"/>
        <end position="167"/>
    </location>
</feature>
<feature type="helix" evidence="2">
    <location>
        <begin position="178"/>
        <end position="195"/>
    </location>
</feature>
<feature type="helix" evidence="2">
    <location>
        <begin position="198"/>
        <end position="200"/>
    </location>
</feature>
<feature type="strand" evidence="2">
    <location>
        <begin position="203"/>
        <end position="207"/>
    </location>
</feature>
<feature type="helix" evidence="2">
    <location>
        <begin position="213"/>
        <end position="215"/>
    </location>
</feature>
<feature type="turn" evidence="2">
    <location>
        <begin position="217"/>
        <end position="219"/>
    </location>
</feature>
<feature type="helix" evidence="2">
    <location>
        <begin position="228"/>
        <end position="239"/>
    </location>
</feature>
<feature type="strand" evidence="2">
    <location>
        <begin position="246"/>
        <end position="248"/>
    </location>
</feature>
<feature type="helix" evidence="2">
    <location>
        <begin position="255"/>
        <end position="268"/>
    </location>
</feature>
<feature type="strand" evidence="2">
    <location>
        <begin position="274"/>
        <end position="277"/>
    </location>
</feature>
<feature type="helix" evidence="2">
    <location>
        <begin position="279"/>
        <end position="282"/>
    </location>
</feature>
<feature type="helix" evidence="2">
    <location>
        <begin position="285"/>
        <end position="292"/>
    </location>
</feature>
<feature type="helix" evidence="2">
    <location>
        <begin position="294"/>
        <end position="302"/>
    </location>
</feature>
<feature type="helix" evidence="2">
    <location>
        <begin position="304"/>
        <end position="319"/>
    </location>
</feature>
<feature type="helix" evidence="2">
    <location>
        <begin position="323"/>
        <end position="325"/>
    </location>
</feature>
<keyword id="KW-0002">3D-structure</keyword>
<keyword id="KW-0423">Lactose metabolism</keyword>
<keyword id="KW-0456">Lyase</keyword>
<keyword id="KW-1185">Reference proteome</keyword>
<gene>
    <name type="primary">lacD2</name>
    <name type="synonym">lacD.2</name>
    <name type="ordered locus">SPy_1919</name>
    <name type="ordered locus">M5005_Spy1635</name>
</gene>
<organism>
    <name type="scientific">Streptococcus pyogenes serotype M1</name>
    <dbReference type="NCBI Taxonomy" id="301447"/>
    <lineage>
        <taxon>Bacteria</taxon>
        <taxon>Bacillati</taxon>
        <taxon>Bacillota</taxon>
        <taxon>Bacilli</taxon>
        <taxon>Lactobacillales</taxon>
        <taxon>Streptococcaceae</taxon>
        <taxon>Streptococcus</taxon>
    </lineage>
</organism>
<reference key="1">
    <citation type="journal article" date="2001" name="Proc. Natl. Acad. Sci. U.S.A.">
        <title>Complete genome sequence of an M1 strain of Streptococcus pyogenes.</title>
        <authorList>
            <person name="Ferretti J.J."/>
            <person name="McShan W.M."/>
            <person name="Ajdic D.J."/>
            <person name="Savic D.J."/>
            <person name="Savic G."/>
            <person name="Lyon K."/>
            <person name="Primeaux C."/>
            <person name="Sezate S."/>
            <person name="Suvorov A.N."/>
            <person name="Kenton S."/>
            <person name="Lai H.S."/>
            <person name="Lin S.P."/>
            <person name="Qian Y."/>
            <person name="Jia H.G."/>
            <person name="Najar F.Z."/>
            <person name="Ren Q."/>
            <person name="Zhu H."/>
            <person name="Song L."/>
            <person name="White J."/>
            <person name="Yuan X."/>
            <person name="Clifton S.W."/>
            <person name="Roe B.A."/>
            <person name="McLaughlin R.E."/>
        </authorList>
    </citation>
    <scope>NUCLEOTIDE SEQUENCE [LARGE SCALE GENOMIC DNA]</scope>
    <source>
        <strain>ATCC 700294 / SF370 / Serotype M1</strain>
    </source>
</reference>
<reference key="2">
    <citation type="journal article" date="2005" name="J. Infect. Dis.">
        <title>Evolutionary origin and emergence of a highly successful clone of serotype M1 group A Streptococcus involved multiple horizontal gene transfer events.</title>
        <authorList>
            <person name="Sumby P."/>
            <person name="Porcella S.F."/>
            <person name="Madrigal A.G."/>
            <person name="Barbian K.D."/>
            <person name="Virtaneva K."/>
            <person name="Ricklefs S.M."/>
            <person name="Sturdevant D.E."/>
            <person name="Graham M.R."/>
            <person name="Vuopio-Varkila J."/>
            <person name="Hoe N.P."/>
            <person name="Musser J.M."/>
        </authorList>
    </citation>
    <scope>NUCLEOTIDE SEQUENCE [LARGE SCALE GENOMIC DNA]</scope>
    <source>
        <strain>ATCC BAA-947 / MGAS5005 / Serotype M1</strain>
    </source>
</reference>
<comment type="catalytic activity">
    <reaction>
        <text>D-tagatofuranose 1,6-bisphosphate = D-glyceraldehyde 3-phosphate + dihydroxyacetone phosphate</text>
        <dbReference type="Rhea" id="RHEA:22948"/>
        <dbReference type="ChEBI" id="CHEBI:57642"/>
        <dbReference type="ChEBI" id="CHEBI:58694"/>
        <dbReference type="ChEBI" id="CHEBI:59776"/>
        <dbReference type="EC" id="4.1.2.40"/>
    </reaction>
</comment>
<comment type="pathway">
    <text>Carbohydrate metabolism; D-tagatose 6-phosphate degradation; D-glyceraldehyde 3-phosphate and glycerone phosphate from D-tagatose 6-phosphate: step 2/2.</text>
</comment>
<comment type="similarity">
    <text evidence="1">Belongs to the aldolase LacD family.</text>
</comment>
<sequence length="327" mass="36577">MTITLTENKRKSMEKLSVDGVISALAFDQRGALKRMMAQHQTKEPTVEQIEELKSLVSEELTPFASSILLDPEYGLPASRVRSEEAGLLLAYEKTGYDATTTSRLPDCLDVWSAKRIKEAGAEAVKFLLYYDIDGDQDVNEQKKAYIERIGSECRAEDIPFYLEILTYDEKIADNASPEFAKVKAHKVNEAMKVFSKERFGVDVLKVEVPVNMKFVEGFADGEVLFTKEEAAQAFRDQEASTDLPYIYLSAGVSAKLFQDTLVFAAESGAKFNGVLCGRATWAGSVKVYIEEGPQAAREWLRTEGFKNIDELNKVLDKTASPWTEKM</sequence>
<protein>
    <recommendedName>
        <fullName>Tagatose 1,6-diphosphate aldolase 2</fullName>
        <ecNumber>4.1.2.40</ecNumber>
    </recommendedName>
    <alternativeName>
        <fullName>D-tagatose-1,6-bisphosphate aldolase 2</fullName>
    </alternativeName>
    <alternativeName>
        <fullName>Tagatose-bisphosphate aldolase 2</fullName>
    </alternativeName>
</protein>
<accession>P63705</accession>
<accession>Q48WM2</accession>
<accession>Q99Y15</accession>